<keyword id="KW-1003">Cell membrane</keyword>
<keyword id="KW-0472">Membrane</keyword>
<keyword id="KW-0475">Mercuric resistance</keyword>
<keyword id="KW-0476">Mercury</keyword>
<keyword id="KW-0479">Metal-binding</keyword>
<keyword id="KW-0812">Transmembrane</keyword>
<keyword id="KW-1133">Transmembrane helix</keyword>
<keyword id="KW-0813">Transport</keyword>
<gene>
    <name type="primary">merT</name>
</gene>
<organism>
    <name type="scientific">Streptomyces lividans</name>
    <dbReference type="NCBI Taxonomy" id="1916"/>
    <lineage>
        <taxon>Bacteria</taxon>
        <taxon>Bacillati</taxon>
        <taxon>Actinomycetota</taxon>
        <taxon>Actinomycetes</taxon>
        <taxon>Kitasatosporales</taxon>
        <taxon>Streptomycetaceae</taxon>
        <taxon>Streptomyces</taxon>
    </lineage>
</organism>
<protein>
    <recommendedName>
        <fullName>Mercuric transport protein</fullName>
    </recommendedName>
    <alternativeName>
        <fullName>Mercury ion transport protein</fullName>
    </alternativeName>
</protein>
<comment type="function">
    <text>Involved in mercuric transport. Passes a mercury ion from the MerP protein to the mercuric reductase MerA.</text>
</comment>
<comment type="subcellular location">
    <subcellularLocation>
        <location>Cell membrane</location>
        <topology>Multi-pass membrane protein</topology>
    </subcellularLocation>
</comment>
<sequence>MTPPPTQPGDRRGGLLGTLAVVGVALLPIICCAGPVLLASGALAGLGGVLVSPWLLAPAAVLLAGALTWWLRRRRTGNGDACCLPAPRTDQHDRDLLRKQ</sequence>
<reference key="1">
    <citation type="journal article" date="1992" name="Mol. Gen. Genet.">
        <title>Cloning and DNA sequence analysis of the mercury resistance genes of Streptomyces lividans.</title>
        <authorList>
            <person name="Sedlmeier R."/>
            <person name="Altenbuchner J."/>
        </authorList>
    </citation>
    <scope>NUCLEOTIDE SEQUENCE [GENOMIC DNA]</scope>
    <source>
        <strain>66 / 1326</strain>
    </source>
</reference>
<accession>P30345</accession>
<proteinExistence type="predicted"/>
<name>MERT_STRLI</name>
<dbReference type="EMBL" id="X65467">
    <property type="protein sequence ID" value="CAA46463.1"/>
    <property type="molecule type" value="Genomic_DNA"/>
</dbReference>
<dbReference type="PIR" id="S30171">
    <property type="entry name" value="S30171"/>
</dbReference>
<dbReference type="GO" id="GO:0005886">
    <property type="term" value="C:plasma membrane"/>
    <property type="evidence" value="ECO:0007669"/>
    <property type="project" value="UniProtKB-SubCell"/>
</dbReference>
<dbReference type="GO" id="GO:0046872">
    <property type="term" value="F:metal ion binding"/>
    <property type="evidence" value="ECO:0007669"/>
    <property type="project" value="UniProtKB-KW"/>
</dbReference>
<dbReference type="GO" id="GO:0046689">
    <property type="term" value="P:response to mercury ion"/>
    <property type="evidence" value="ECO:0007669"/>
    <property type="project" value="UniProtKB-KW"/>
</dbReference>
<feature type="chain" id="PRO_0000096437" description="Mercuric transport protein">
    <location>
        <begin position="1"/>
        <end position="100"/>
    </location>
</feature>
<feature type="transmembrane region" description="Helical" evidence="1">
    <location>
        <begin position="19"/>
        <end position="39"/>
    </location>
</feature>
<feature type="transmembrane region" description="Helical" evidence="1">
    <location>
        <begin position="43"/>
        <end position="63"/>
    </location>
</feature>
<feature type="binding site" evidence="1">
    <location>
        <position position="31"/>
    </location>
    <ligand>
        <name>Hg(2+)</name>
        <dbReference type="ChEBI" id="CHEBI:16793"/>
    </ligand>
</feature>
<feature type="binding site" evidence="1">
    <location>
        <position position="32"/>
    </location>
    <ligand>
        <name>Hg(2+)</name>
        <dbReference type="ChEBI" id="CHEBI:16793"/>
    </ligand>
</feature>
<feature type="binding site" evidence="1">
    <location>
        <position position="82"/>
    </location>
    <ligand>
        <name>Hg(2+)</name>
        <dbReference type="ChEBI" id="CHEBI:16793"/>
    </ligand>
</feature>
<feature type="binding site" evidence="1">
    <location>
        <position position="83"/>
    </location>
    <ligand>
        <name>Hg(2+)</name>
        <dbReference type="ChEBI" id="CHEBI:16793"/>
    </ligand>
</feature>
<evidence type="ECO:0000255" key="1"/>